<keyword id="KW-0235">DNA replication</keyword>
<keyword id="KW-0238">DNA-binding</keyword>
<keyword id="KW-0239">DNA-directed DNA polymerase</keyword>
<keyword id="KW-0255">Endonuclease</keyword>
<keyword id="KW-0945">Host-virus interaction</keyword>
<keyword id="KW-0378">Hydrolase</keyword>
<keyword id="KW-1090">Inhibition of host innate immune response by virus</keyword>
<keyword id="KW-1113">Inhibition of host RLR pathway by virus</keyword>
<keyword id="KW-0460">Magnesium</keyword>
<keyword id="KW-0479">Metal-binding</keyword>
<keyword id="KW-0511">Multifunctional enzyme</keyword>
<keyword id="KW-0540">Nuclease</keyword>
<keyword id="KW-0548">Nucleotidyltransferase</keyword>
<keyword id="KW-0695">RNA-directed DNA polymerase</keyword>
<keyword id="KW-0808">Transferase</keyword>
<keyword id="KW-0899">Viral immunoevasion</keyword>
<proteinExistence type="inferred from homology"/>
<name>DPOL_ASHV</name>
<dbReference type="EC" id="2.7.7.7" evidence="1"/>
<dbReference type="EC" id="2.7.7.49" evidence="1"/>
<dbReference type="EC" id="3.1.26.4" evidence="1"/>
<dbReference type="EMBL" id="U29144">
    <property type="protein sequence ID" value="AAB08032.1"/>
    <property type="molecule type" value="Genomic_DNA"/>
</dbReference>
<dbReference type="Proteomes" id="UP000008172">
    <property type="component" value="Genome"/>
</dbReference>
<dbReference type="GO" id="GO:0003677">
    <property type="term" value="F:DNA binding"/>
    <property type="evidence" value="ECO:0007669"/>
    <property type="project" value="UniProtKB-UniRule"/>
</dbReference>
<dbReference type="GO" id="GO:0003887">
    <property type="term" value="F:DNA-directed DNA polymerase activity"/>
    <property type="evidence" value="ECO:0007669"/>
    <property type="project" value="UniProtKB-UniRule"/>
</dbReference>
<dbReference type="GO" id="GO:0046872">
    <property type="term" value="F:metal ion binding"/>
    <property type="evidence" value="ECO:0007669"/>
    <property type="project" value="UniProtKB-UniRule"/>
</dbReference>
<dbReference type="GO" id="GO:0003964">
    <property type="term" value="F:RNA-directed DNA polymerase activity"/>
    <property type="evidence" value="ECO:0007669"/>
    <property type="project" value="UniProtKB-UniRule"/>
</dbReference>
<dbReference type="GO" id="GO:0004523">
    <property type="term" value="F:RNA-DNA hybrid ribonuclease activity"/>
    <property type="evidence" value="ECO:0007669"/>
    <property type="project" value="UniProtKB-UniRule"/>
</dbReference>
<dbReference type="GO" id="GO:0006260">
    <property type="term" value="P:DNA replication"/>
    <property type="evidence" value="ECO:0007669"/>
    <property type="project" value="UniProtKB-UniRule"/>
</dbReference>
<dbReference type="GO" id="GO:0052170">
    <property type="term" value="P:symbiont-mediated suppression of host innate immune response"/>
    <property type="evidence" value="ECO:0007669"/>
    <property type="project" value="UniProtKB-UniRule"/>
</dbReference>
<dbReference type="Gene3D" id="3.30.70.270">
    <property type="match status" value="1"/>
</dbReference>
<dbReference type="HAMAP" id="MF_04073">
    <property type="entry name" value="HBV_DPOL"/>
    <property type="match status" value="1"/>
</dbReference>
<dbReference type="InterPro" id="IPR043502">
    <property type="entry name" value="DNA/RNA_pol_sf"/>
</dbReference>
<dbReference type="InterPro" id="IPR001462">
    <property type="entry name" value="DNApol_viral_C"/>
</dbReference>
<dbReference type="InterPro" id="IPR000201">
    <property type="entry name" value="DNApol_viral_N"/>
</dbReference>
<dbReference type="InterPro" id="IPR037531">
    <property type="entry name" value="HBV_DPOL"/>
</dbReference>
<dbReference type="InterPro" id="IPR052055">
    <property type="entry name" value="Hepadnavirus_pol/RT"/>
</dbReference>
<dbReference type="InterPro" id="IPR043128">
    <property type="entry name" value="Rev_trsase/Diguanyl_cyclase"/>
</dbReference>
<dbReference type="InterPro" id="IPR000477">
    <property type="entry name" value="RT_dom"/>
</dbReference>
<dbReference type="PANTHER" id="PTHR33050">
    <property type="entry name" value="REVERSE TRANSCRIPTASE DOMAIN-CONTAINING PROTEIN"/>
    <property type="match status" value="1"/>
</dbReference>
<dbReference type="PANTHER" id="PTHR33050:SF7">
    <property type="entry name" value="RIBONUCLEASE H"/>
    <property type="match status" value="1"/>
</dbReference>
<dbReference type="Pfam" id="PF00336">
    <property type="entry name" value="DNA_pol_viral_C"/>
    <property type="match status" value="1"/>
</dbReference>
<dbReference type="Pfam" id="PF00242">
    <property type="entry name" value="DNA_pol_viral_N"/>
    <property type="match status" value="1"/>
</dbReference>
<dbReference type="Pfam" id="PF00078">
    <property type="entry name" value="RVT_1"/>
    <property type="match status" value="1"/>
</dbReference>
<dbReference type="SUPFAM" id="SSF56672">
    <property type="entry name" value="DNA/RNA polymerases"/>
    <property type="match status" value="1"/>
</dbReference>
<dbReference type="PROSITE" id="PS50878">
    <property type="entry name" value="RT_POL"/>
    <property type="match status" value="1"/>
</dbReference>
<protein>
    <recommendedName>
        <fullName evidence="1">Protein P</fullName>
    </recommendedName>
    <domain>
        <recommendedName>
            <fullName evidence="1">DNA-directed DNA polymerase</fullName>
            <ecNumber evidence="1">2.7.7.7</ecNumber>
        </recommendedName>
    </domain>
    <domain>
        <recommendedName>
            <fullName evidence="1">RNA-directed DNA polymerase</fullName>
            <ecNumber evidence="1">2.7.7.49</ecNumber>
        </recommendedName>
    </domain>
    <domain>
        <recommendedName>
            <fullName evidence="1">Ribonuclease H</fullName>
            <ecNumber evidence="1">3.1.26.4</ecNumber>
        </recommendedName>
    </domain>
</protein>
<gene>
    <name evidence="1" type="primary">P</name>
</gene>
<organism>
    <name type="scientific">Arctic squirrel hepatitis virus</name>
    <name type="common">ASHV</name>
    <dbReference type="NCBI Taxonomy" id="41952"/>
    <lineage>
        <taxon>Viruses</taxon>
        <taxon>Riboviria</taxon>
        <taxon>Pararnavirae</taxon>
        <taxon>Artverviricota</taxon>
        <taxon>Revtraviricetes</taxon>
        <taxon>Blubervirales</taxon>
        <taxon>Hepadnaviridae</taxon>
        <taxon>Orthohepadnavirus</taxon>
        <taxon>Ground squirrel hepatitis virus (strain 27)</taxon>
    </lineage>
</organism>
<sequence length="877" mass="98038">MHPFSQLFRNIQSLGEEEVQELLGPPEDALPLLAGEDLNHRVAGLNLQLPTADLDWVHQTNAITGLYSTQTAKFNPEWKQPDFPKIHLSEDLFLNYNNFCGPLTVNEKRKLKLNFPARFFPKATKYFPLSKGIKNNYPDFSIEHFFAAATYLWTLWESGILYLRKNQTTLTFKGKPYSWGHRQLEQHNGQQHESHLQSRESSSMVASSGHILHKQHASGPSSFPTRDLPNNFFGESQKSARTGGSVREKIQTNRLGFPGKSKITIGQQGSSQVSSPRSKSSNFRNQTQANHSSWNQRHPTWYSTTSNTTQSRQREETYSSDSAFKRHSPSFEHEKSEPSSSGLCGGTESLNNTGTSTFCLWRSFYNTEPCGAYCLHHIVSSLEDWGPCTISGDVTIRSPRTPRRITGGVFLVDKHPHNSSESRLVVDFSQFSRGHTRVHWPKFAVLNLQALANLLSTNLQWLSLDVSAAFYHIPVSPAAVPHLLVGSPGLERFTPSMSHTTIHGNNSKLQTMHNLCSRHLFNSLLLLFKTYGRKLHLLAHPFIMGFRKLPMGVGLSPFLLAQFTSALASMVRRNFPHCVAFAYMDDLVLGARTHEHLTAIYSHICSVFLDLGIHLNVAKTKWWGHHLHFMGYVITGAGILPQDKHVQKVSTYLKSIPLNKPLDYKICERLTGILNYVAPFTKCGYAALLPLYQATSRTAFVFSSLYHSWLLSLYAELWPVARQRGVVCSVSDATPTGWGICTTYQLISPTGAFALPIATADVIAACLARCWTGARLLGTDNSVVLSGKLTSYPWLLACVANWILRGTSFCYVPSAANPADLPSRGLLPALHPVPTLRFRPQLSRISLWAASPPVSPRRPVRVAWASPVQNSEPWFPP</sequence>
<feature type="chain" id="PRO_0000323250" description="Protein P">
    <location>
        <begin position="1"/>
        <end position="877"/>
    </location>
</feature>
<feature type="domain" description="Reverse transcriptase" evidence="1">
    <location>
        <begin position="393"/>
        <end position="634"/>
    </location>
</feature>
<feature type="region of interest" description="Terminal protein domain (TP)" evidence="1">
    <location>
        <begin position="1"/>
        <end position="183"/>
    </location>
</feature>
<feature type="region of interest" description="Spacer" evidence="1">
    <location>
        <begin position="184"/>
        <end position="382"/>
    </location>
</feature>
<feature type="region of interest" description="Disordered" evidence="2">
    <location>
        <begin position="185"/>
        <end position="347"/>
    </location>
</feature>
<feature type="region of interest" description="Polymerase/reverse transcriptase domain (RT)" evidence="1">
    <location>
        <begin position="383"/>
        <end position="723"/>
    </location>
</feature>
<feature type="compositionally biased region" description="Basic and acidic residues" evidence="2">
    <location>
        <begin position="185"/>
        <end position="198"/>
    </location>
</feature>
<feature type="compositionally biased region" description="Polar residues" evidence="2">
    <location>
        <begin position="233"/>
        <end position="242"/>
    </location>
</feature>
<feature type="compositionally biased region" description="Low complexity" evidence="2">
    <location>
        <begin position="267"/>
        <end position="281"/>
    </location>
</feature>
<feature type="compositionally biased region" description="Polar residues" evidence="2">
    <location>
        <begin position="282"/>
        <end position="302"/>
    </location>
</feature>
<feature type="compositionally biased region" description="Polar residues" evidence="2">
    <location>
        <begin position="338"/>
        <end position="347"/>
    </location>
</feature>
<feature type="binding site" evidence="1">
    <location>
        <position position="465"/>
    </location>
    <ligand>
        <name>Mg(2+)</name>
        <dbReference type="ChEBI" id="CHEBI:18420"/>
        <note>catalytic</note>
    </ligand>
</feature>
<feature type="binding site" evidence="1">
    <location>
        <position position="585"/>
    </location>
    <ligand>
        <name>Mg(2+)</name>
        <dbReference type="ChEBI" id="CHEBI:18420"/>
        <note>catalytic</note>
    </ligand>
</feature>
<feature type="binding site" evidence="1">
    <location>
        <position position="586"/>
    </location>
    <ligand>
        <name>Mg(2+)</name>
        <dbReference type="ChEBI" id="CHEBI:18420"/>
        <note>catalytic</note>
    </ligand>
</feature>
<feature type="site" description="Priming of reverse-transcription by covalently linking the first nucleotide of the (-)DNA" evidence="1">
    <location>
        <position position="67"/>
    </location>
</feature>
<reference key="1">
    <citation type="journal article" date="1996" name="J. Virol.">
        <title>A new hepadnavirus endemic in arctic ground squirrels in Alaska.</title>
        <authorList>
            <person name="Testut P."/>
            <person name="Renard C.A."/>
            <person name="Terradillos O."/>
            <person name="Vitvitski-Trepo L."/>
            <person name="Tekaia F."/>
            <person name="Degott C."/>
            <person name="Blake J."/>
            <person name="Boyer B."/>
            <person name="Buendia M.A."/>
        </authorList>
    </citation>
    <scope>NUCLEOTIDE SEQUENCE [GENOMIC DNA]</scope>
</reference>
<reference key="2">
    <citation type="journal article" date="2007" name="World J. Gastroenterol.">
        <title>Hepatitis B virus replication.</title>
        <authorList>
            <person name="Beck J."/>
            <person name="Nassal M."/>
        </authorList>
    </citation>
    <scope>REVIEW</scope>
</reference>
<comment type="function">
    <text evidence="1">Multifunctional enzyme that converts the viral RNA genome into dsDNA in viral cytoplasmic capsids. This enzyme displays a DNA polymerase activity that can copy either DNA or RNA templates, and a ribonuclease H (RNase H) activity that cleaves the RNA strand of RNA-DNA heteroduplexes in a partially processive 3'- to 5'-endonucleasic mode. Neo-synthesized pregenomic RNA (pgRNA) are encapsidated together with the P protein, and reverse-transcribed inside the nucleocapsid. Initiation of reverse-transcription occurs first by binding the epsilon loop on the pgRNA genome, and is initiated by protein priming, thereby the 5'-end of (-)DNA is covalently linked to P protein. Partial (+)DNA is synthesized from the (-)DNA template and generates the relaxed circular DNA (RC-DNA) genome. After budding and infection, the RC-DNA migrates in the nucleus, and is converted into a plasmid-like covalently closed circular DNA (cccDNA). The activity of P protein does not seem to be necessary for cccDNA generation, and is presumably released from (+)DNA by host nuclear DNA repair machinery.</text>
</comment>
<comment type="catalytic activity">
    <reaction evidence="1">
        <text>DNA(n) + a 2'-deoxyribonucleoside 5'-triphosphate = DNA(n+1) + diphosphate</text>
        <dbReference type="Rhea" id="RHEA:22508"/>
        <dbReference type="Rhea" id="RHEA-COMP:17339"/>
        <dbReference type="Rhea" id="RHEA-COMP:17340"/>
        <dbReference type="ChEBI" id="CHEBI:33019"/>
        <dbReference type="ChEBI" id="CHEBI:61560"/>
        <dbReference type="ChEBI" id="CHEBI:173112"/>
        <dbReference type="EC" id="2.7.7.7"/>
    </reaction>
</comment>
<comment type="catalytic activity">
    <reaction evidence="1">
        <text>DNA(n) + a 2'-deoxyribonucleoside 5'-triphosphate = DNA(n+1) + diphosphate</text>
        <dbReference type="Rhea" id="RHEA:22508"/>
        <dbReference type="Rhea" id="RHEA-COMP:17339"/>
        <dbReference type="Rhea" id="RHEA-COMP:17340"/>
        <dbReference type="ChEBI" id="CHEBI:33019"/>
        <dbReference type="ChEBI" id="CHEBI:61560"/>
        <dbReference type="ChEBI" id="CHEBI:173112"/>
        <dbReference type="EC" id="2.7.7.49"/>
    </reaction>
</comment>
<comment type="catalytic activity">
    <reaction evidence="1">
        <text>Endonucleolytic cleavage to 5'-phosphomonoester.</text>
        <dbReference type="EC" id="3.1.26.4"/>
    </reaction>
</comment>
<comment type="activity regulation">
    <text evidence="1">Activated by host HSP70 and HSP40 in vitro to be able to bind the epsilon loop of the pgRNA. Because deletion of the RNase H region renders the protein partly chaperone-independent, the chaperones may be needed indirectly to relieve occlusion of the RNA-binding site by this domain. Inhibited by several reverse-transcriptase inhibitors: Lamivudine, Adefovir and Entecavir.</text>
</comment>
<comment type="domain">
    <text evidence="1">Terminal protein domain (TP) is hepadnavirus-specific. Spacer domain is highly variable and separates the TP and RT domains. Polymerase/reverse-transcriptase domain (RT) and ribonuclease H domain (RH) are similar to retrovirus reverse transcriptase/RNase H.</text>
</comment>
<comment type="domain">
    <text evidence="1">The polymerase/reverse transcriptase (RT) and ribonuclease H (RH) domains are structured in five subdomains: finger, palm, thumb, connection and RNase H. Within the palm subdomain, the 'primer grip' region is thought to be involved in the positioning of the primer terminus for accommodating the incoming nucleotide. The RH domain stabilizes the association of RT with primer-template.</text>
</comment>
<comment type="miscellaneous">
    <text evidence="1">Hepadnaviral virions contain probably just one P protein molecule per particle.</text>
</comment>
<comment type="similarity">
    <text evidence="1">Belongs to the hepadnaviridae P protein family.</text>
</comment>
<accession>Q64898</accession>
<organismHost>
    <name type="scientific">Urocitellus parryii kennicottii</name>
    <dbReference type="NCBI Taxonomy" id="259022"/>
</organismHost>
<evidence type="ECO:0000255" key="1">
    <source>
        <dbReference type="HAMAP-Rule" id="MF_04073"/>
    </source>
</evidence>
<evidence type="ECO:0000256" key="2">
    <source>
        <dbReference type="SAM" id="MobiDB-lite"/>
    </source>
</evidence>